<organism>
    <name type="scientific">Staphylococcus aureus (strain MW2)</name>
    <dbReference type="NCBI Taxonomy" id="196620"/>
    <lineage>
        <taxon>Bacteria</taxon>
        <taxon>Bacillati</taxon>
        <taxon>Bacillota</taxon>
        <taxon>Bacilli</taxon>
        <taxon>Bacillales</taxon>
        <taxon>Staphylococcaceae</taxon>
        <taxon>Staphylococcus</taxon>
    </lineage>
</organism>
<keyword id="KW-0010">Activator</keyword>
<keyword id="KW-0963">Cytoplasm</keyword>
<keyword id="KW-0238">DNA-binding</keyword>
<keyword id="KW-0597">Phosphoprotein</keyword>
<keyword id="KW-0804">Transcription</keyword>
<keyword id="KW-0805">Transcription regulation</keyword>
<keyword id="KW-0902">Two-component regulatory system</keyword>
<protein>
    <recommendedName>
        <fullName>Response regulator protein VraR</fullName>
    </recommendedName>
</protein>
<proteinExistence type="inferred from homology"/>
<evidence type="ECO:0000250" key="1">
    <source>
        <dbReference type="UniProtKB" id="P0C0Z1"/>
    </source>
</evidence>
<evidence type="ECO:0000250" key="2">
    <source>
        <dbReference type="UniProtKB" id="Q7A2Q1"/>
    </source>
</evidence>
<evidence type="ECO:0000255" key="3">
    <source>
        <dbReference type="PROSITE-ProRule" id="PRU00169"/>
    </source>
</evidence>
<evidence type="ECO:0000255" key="4">
    <source>
        <dbReference type="PROSITE-ProRule" id="PRU00411"/>
    </source>
</evidence>
<evidence type="ECO:0000305" key="5"/>
<sequence length="209" mass="23559">MTIKVLFVDDHEMVRIGISSYLSTQSDIEVVGEGASGKEAIAKAHELKPDLILMDLLMEDMDGVEATTQIKKDLPQIKVLMLTSFIEDKEVYRALDAGVDSYILKTTSAKDIADAVRKTSRGESVFEPEVLVKMRNRMKKRAELYEMLTEREMEILLLIAKGYSNQEIASASHITIKTVKTHVSNILSKLEVQDRTQAVIYAFQHNLIQ</sequence>
<accession>Q7A0I0</accession>
<name>VRAR_STAAW</name>
<gene>
    <name type="primary">vraR</name>
    <name type="ordered locus">MW1824</name>
</gene>
<dbReference type="EMBL" id="BA000033">
    <property type="protein sequence ID" value="BAB95689.1"/>
    <property type="molecule type" value="Genomic_DNA"/>
</dbReference>
<dbReference type="RefSeq" id="WP_000153535.1">
    <property type="nucleotide sequence ID" value="NC_003923.1"/>
</dbReference>
<dbReference type="SMR" id="Q7A0I0"/>
<dbReference type="KEGG" id="sam:MW1824"/>
<dbReference type="HOGENOM" id="CLU_000445_90_10_9"/>
<dbReference type="GO" id="GO:0005737">
    <property type="term" value="C:cytoplasm"/>
    <property type="evidence" value="ECO:0007669"/>
    <property type="project" value="UniProtKB-SubCell"/>
</dbReference>
<dbReference type="GO" id="GO:0003677">
    <property type="term" value="F:DNA binding"/>
    <property type="evidence" value="ECO:0007669"/>
    <property type="project" value="UniProtKB-KW"/>
</dbReference>
<dbReference type="GO" id="GO:0000160">
    <property type="term" value="P:phosphorelay signal transduction system"/>
    <property type="evidence" value="ECO:0007669"/>
    <property type="project" value="UniProtKB-KW"/>
</dbReference>
<dbReference type="GO" id="GO:0006355">
    <property type="term" value="P:regulation of DNA-templated transcription"/>
    <property type="evidence" value="ECO:0007669"/>
    <property type="project" value="InterPro"/>
</dbReference>
<dbReference type="CDD" id="cd06170">
    <property type="entry name" value="LuxR_C_like"/>
    <property type="match status" value="1"/>
</dbReference>
<dbReference type="CDD" id="cd17535">
    <property type="entry name" value="REC_NarL-like"/>
    <property type="match status" value="1"/>
</dbReference>
<dbReference type="Gene3D" id="3.40.50.2300">
    <property type="match status" value="1"/>
</dbReference>
<dbReference type="InterPro" id="IPR011006">
    <property type="entry name" value="CheY-like_superfamily"/>
</dbReference>
<dbReference type="InterPro" id="IPR016032">
    <property type="entry name" value="Sig_transdc_resp-reg_C-effctor"/>
</dbReference>
<dbReference type="InterPro" id="IPR001789">
    <property type="entry name" value="Sig_transdc_resp-reg_receiver"/>
</dbReference>
<dbReference type="InterPro" id="IPR000792">
    <property type="entry name" value="Tscrpt_reg_LuxR_C"/>
</dbReference>
<dbReference type="InterPro" id="IPR039420">
    <property type="entry name" value="WalR-like"/>
</dbReference>
<dbReference type="PANTHER" id="PTHR43214:SF37">
    <property type="entry name" value="TRANSCRIPTIONAL REGULATORY PROTEIN YDFI"/>
    <property type="match status" value="1"/>
</dbReference>
<dbReference type="PANTHER" id="PTHR43214">
    <property type="entry name" value="TWO-COMPONENT RESPONSE REGULATOR"/>
    <property type="match status" value="1"/>
</dbReference>
<dbReference type="Pfam" id="PF00196">
    <property type="entry name" value="GerE"/>
    <property type="match status" value="1"/>
</dbReference>
<dbReference type="Pfam" id="PF00072">
    <property type="entry name" value="Response_reg"/>
    <property type="match status" value="1"/>
</dbReference>
<dbReference type="PRINTS" id="PR00038">
    <property type="entry name" value="HTHLUXR"/>
</dbReference>
<dbReference type="SMART" id="SM00421">
    <property type="entry name" value="HTH_LUXR"/>
    <property type="match status" value="1"/>
</dbReference>
<dbReference type="SMART" id="SM00448">
    <property type="entry name" value="REC"/>
    <property type="match status" value="1"/>
</dbReference>
<dbReference type="SUPFAM" id="SSF46894">
    <property type="entry name" value="C-terminal effector domain of the bipartite response regulators"/>
    <property type="match status" value="1"/>
</dbReference>
<dbReference type="SUPFAM" id="SSF52172">
    <property type="entry name" value="CheY-like"/>
    <property type="match status" value="1"/>
</dbReference>
<dbReference type="PROSITE" id="PS50043">
    <property type="entry name" value="HTH_LUXR_2"/>
    <property type="match status" value="1"/>
</dbReference>
<dbReference type="PROSITE" id="PS50110">
    <property type="entry name" value="RESPONSE_REGULATORY"/>
    <property type="match status" value="1"/>
</dbReference>
<reference key="1">
    <citation type="journal article" date="2002" name="Lancet">
        <title>Genome and virulence determinants of high virulence community-acquired MRSA.</title>
        <authorList>
            <person name="Baba T."/>
            <person name="Takeuchi F."/>
            <person name="Kuroda M."/>
            <person name="Yuzawa H."/>
            <person name="Aoki K."/>
            <person name="Oguchi A."/>
            <person name="Nagai Y."/>
            <person name="Iwama N."/>
            <person name="Asano K."/>
            <person name="Naimi T."/>
            <person name="Kuroda H."/>
            <person name="Cui L."/>
            <person name="Yamamoto K."/>
            <person name="Hiramatsu K."/>
        </authorList>
    </citation>
    <scope>NUCLEOTIDE SEQUENCE [LARGE SCALE GENOMIC DNA]</scope>
    <source>
        <strain>MW2</strain>
    </source>
</reference>
<comment type="function">
    <text evidence="1 2">Member of the two-component regulatory system VraS/VraR involved in the control of the cell wall peptidoglycan biosynthesis. Upon cellular stress, the histidine kinase VraS transfers the phosphoryl group onto VraR. Upon phosphorylation, VraR dimerizes at the N-terminal domain. In turn, phosphorylation-induced dimerization expands and enhances the VraR binding to its own promoter leading to increased expression and subsequent modulation of as many as 40 genes, which ultimately constitute the S.aureus response to cell wall damage (By similarity). In addition, inhibits the host autophagic flux and delays the early stage of autophagosome formation, thereby promoting bacterial survival. Facilitates the ability of S.aureus to resist host polymorphonuclear leukocytes-mediated phagocytosis and killing thus contributing to immune evasion (By similarity).</text>
</comment>
<comment type="subunit">
    <text evidence="2">Homodimer.</text>
</comment>
<comment type="subcellular location">
    <subcellularLocation>
        <location evidence="5">Cytoplasm</location>
    </subcellularLocation>
</comment>
<comment type="PTM">
    <text evidence="2">Phosphorylated by VraS. Phosphorylation state of VraR controls dimerization of the protein.</text>
</comment>
<feature type="chain" id="PRO_0000081274" description="Response regulator protein VraR">
    <location>
        <begin position="1"/>
        <end position="209"/>
    </location>
</feature>
<feature type="domain" description="Response regulatory" evidence="3">
    <location>
        <begin position="4"/>
        <end position="120"/>
    </location>
</feature>
<feature type="domain" description="HTH luxR-type" evidence="4">
    <location>
        <begin position="141"/>
        <end position="206"/>
    </location>
</feature>
<feature type="DNA-binding region" description="H-T-H motif" evidence="4">
    <location>
        <begin position="165"/>
        <end position="184"/>
    </location>
</feature>
<feature type="modified residue" description="4-aspartylphosphate" evidence="3">
    <location>
        <position position="55"/>
    </location>
</feature>